<gene>
    <name evidence="1" type="primary">phnC</name>
    <name type="synonym">phoC</name>
    <name type="ordered locus">SPO0780</name>
</gene>
<accession>Q5LVC2</accession>
<keyword id="KW-0067">ATP-binding</keyword>
<keyword id="KW-0997">Cell inner membrane</keyword>
<keyword id="KW-1003">Cell membrane</keyword>
<keyword id="KW-0472">Membrane</keyword>
<keyword id="KW-0547">Nucleotide-binding</keyword>
<keyword id="KW-0918">Phosphonate transport</keyword>
<keyword id="KW-1185">Reference proteome</keyword>
<keyword id="KW-1278">Translocase</keyword>
<keyword id="KW-0813">Transport</keyword>
<dbReference type="EC" id="7.3.2.2" evidence="1"/>
<dbReference type="EMBL" id="CP000031">
    <property type="protein sequence ID" value="AAV94085.1"/>
    <property type="molecule type" value="Genomic_DNA"/>
</dbReference>
<dbReference type="RefSeq" id="WP_011046529.1">
    <property type="nucleotide sequence ID" value="NC_003911.12"/>
</dbReference>
<dbReference type="SMR" id="Q5LVC2"/>
<dbReference type="STRING" id="246200.SPO0780"/>
<dbReference type="PaxDb" id="246200-SPO0780"/>
<dbReference type="KEGG" id="sil:SPO0780"/>
<dbReference type="eggNOG" id="COG3638">
    <property type="taxonomic scope" value="Bacteria"/>
</dbReference>
<dbReference type="HOGENOM" id="CLU_000604_1_22_5"/>
<dbReference type="OrthoDB" id="9802264at2"/>
<dbReference type="Proteomes" id="UP000001023">
    <property type="component" value="Chromosome"/>
</dbReference>
<dbReference type="GO" id="GO:0005886">
    <property type="term" value="C:plasma membrane"/>
    <property type="evidence" value="ECO:0007669"/>
    <property type="project" value="UniProtKB-SubCell"/>
</dbReference>
<dbReference type="GO" id="GO:0015416">
    <property type="term" value="F:ABC-type phosphonate transporter activity"/>
    <property type="evidence" value="ECO:0007669"/>
    <property type="project" value="UniProtKB-EC"/>
</dbReference>
<dbReference type="GO" id="GO:0005524">
    <property type="term" value="F:ATP binding"/>
    <property type="evidence" value="ECO:0007669"/>
    <property type="project" value="UniProtKB-KW"/>
</dbReference>
<dbReference type="GO" id="GO:0016887">
    <property type="term" value="F:ATP hydrolysis activity"/>
    <property type="evidence" value="ECO:0007669"/>
    <property type="project" value="InterPro"/>
</dbReference>
<dbReference type="CDD" id="cd03256">
    <property type="entry name" value="ABC_PhnC_transporter"/>
    <property type="match status" value="1"/>
</dbReference>
<dbReference type="FunFam" id="3.40.50.300:FF:001482">
    <property type="entry name" value="Phosphonates import ATP-binding protein PhnC"/>
    <property type="match status" value="1"/>
</dbReference>
<dbReference type="Gene3D" id="3.40.50.300">
    <property type="entry name" value="P-loop containing nucleotide triphosphate hydrolases"/>
    <property type="match status" value="1"/>
</dbReference>
<dbReference type="InterPro" id="IPR003593">
    <property type="entry name" value="AAA+_ATPase"/>
</dbReference>
<dbReference type="InterPro" id="IPR003439">
    <property type="entry name" value="ABC_transporter-like_ATP-bd"/>
</dbReference>
<dbReference type="InterPro" id="IPR017871">
    <property type="entry name" value="ABC_transporter-like_CS"/>
</dbReference>
<dbReference type="InterPro" id="IPR012693">
    <property type="entry name" value="ABC_transpr_PhnC"/>
</dbReference>
<dbReference type="InterPro" id="IPR050086">
    <property type="entry name" value="MetN_ABC_transporter-like"/>
</dbReference>
<dbReference type="InterPro" id="IPR027417">
    <property type="entry name" value="P-loop_NTPase"/>
</dbReference>
<dbReference type="NCBIfam" id="TIGR02315">
    <property type="entry name" value="ABC_phnC"/>
    <property type="match status" value="1"/>
</dbReference>
<dbReference type="PANTHER" id="PTHR43166">
    <property type="entry name" value="AMINO ACID IMPORT ATP-BINDING PROTEIN"/>
    <property type="match status" value="1"/>
</dbReference>
<dbReference type="PANTHER" id="PTHR43166:SF6">
    <property type="entry name" value="PHOSPHONATES IMPORT ATP-BINDING PROTEIN PHNC"/>
    <property type="match status" value="1"/>
</dbReference>
<dbReference type="Pfam" id="PF00005">
    <property type="entry name" value="ABC_tran"/>
    <property type="match status" value="1"/>
</dbReference>
<dbReference type="SMART" id="SM00382">
    <property type="entry name" value="AAA"/>
    <property type="match status" value="1"/>
</dbReference>
<dbReference type="SUPFAM" id="SSF52540">
    <property type="entry name" value="P-loop containing nucleoside triphosphate hydrolases"/>
    <property type="match status" value="1"/>
</dbReference>
<dbReference type="PROSITE" id="PS00211">
    <property type="entry name" value="ABC_TRANSPORTER_1"/>
    <property type="match status" value="1"/>
</dbReference>
<dbReference type="PROSITE" id="PS50893">
    <property type="entry name" value="ABC_TRANSPORTER_2"/>
    <property type="match status" value="1"/>
</dbReference>
<dbReference type="PROSITE" id="PS51249">
    <property type="entry name" value="PHNC"/>
    <property type="match status" value="1"/>
</dbReference>
<protein>
    <recommendedName>
        <fullName evidence="1">Phosphonates import ATP-binding protein PhnC</fullName>
        <ecNumber evidence="1">7.3.2.2</ecNumber>
    </recommendedName>
</protein>
<feature type="chain" id="PRO_0000274754" description="Phosphonates import ATP-binding protein PhnC">
    <location>
        <begin position="1"/>
        <end position="273"/>
    </location>
</feature>
<feature type="domain" description="ABC transporter" evidence="1">
    <location>
        <begin position="2"/>
        <end position="245"/>
    </location>
</feature>
<feature type="binding site" evidence="1">
    <location>
        <begin position="34"/>
        <end position="41"/>
    </location>
    <ligand>
        <name>ATP</name>
        <dbReference type="ChEBI" id="CHEBI:30616"/>
    </ligand>
</feature>
<proteinExistence type="inferred from homology"/>
<comment type="function">
    <text evidence="1">Part of the ABC transporter complex PhnCDE involved in phosphonates import. Responsible for energy coupling to the transport system.</text>
</comment>
<comment type="catalytic activity">
    <reaction evidence="1">
        <text>phosphonate(out) + ATP + H2O = phosphonate(in) + ADP + phosphate + H(+)</text>
        <dbReference type="Rhea" id="RHEA:18065"/>
        <dbReference type="ChEBI" id="CHEBI:15377"/>
        <dbReference type="ChEBI" id="CHEBI:15378"/>
        <dbReference type="ChEBI" id="CHEBI:16215"/>
        <dbReference type="ChEBI" id="CHEBI:30616"/>
        <dbReference type="ChEBI" id="CHEBI:43474"/>
        <dbReference type="ChEBI" id="CHEBI:456216"/>
        <dbReference type="EC" id="7.3.2.2"/>
    </reaction>
</comment>
<comment type="subunit">
    <text evidence="1">The complex is composed of two ATP-binding proteins (PhnC), two transmembrane proteins (PhnE) and a solute-binding protein (PhnD).</text>
</comment>
<comment type="subcellular location">
    <subcellularLocation>
        <location evidence="1">Cell inner membrane</location>
        <topology evidence="1">Peripheral membrane protein</topology>
    </subcellularLocation>
</comment>
<comment type="similarity">
    <text evidence="1">Belongs to the ABC transporter superfamily. Phosphonates importer (TC 3.A.1.9.1) family.</text>
</comment>
<evidence type="ECO:0000255" key="1">
    <source>
        <dbReference type="HAMAP-Rule" id="MF_01713"/>
    </source>
</evidence>
<name>PHNC_RUEPO</name>
<organism>
    <name type="scientific">Ruegeria pomeroyi (strain ATCC 700808 / DSM 15171 / DSS-3)</name>
    <name type="common">Silicibacter pomeroyi</name>
    <dbReference type="NCBI Taxonomy" id="246200"/>
    <lineage>
        <taxon>Bacteria</taxon>
        <taxon>Pseudomonadati</taxon>
        <taxon>Pseudomonadota</taxon>
        <taxon>Alphaproteobacteria</taxon>
        <taxon>Rhodobacterales</taxon>
        <taxon>Roseobacteraceae</taxon>
        <taxon>Ruegeria</taxon>
    </lineage>
</organism>
<sequence>MLRIDKLTKRFGDNIAVNAATLDVDKPCMIGIIGRSGAGKSTLLRMINRLSDATDGRILFEDRDVTRLRGAEKRAWQAQCAMIFQQFNLVPRMDVVSNVLHGTLNRRSTLATMFNLYPTEDIHRAIDILDRLGIAAHAAKRAEALSGGQQQRVAIARALMQDPAIILADEPIASLDPMNAQVVMQALRRIHEEDGRTVIANLHTLDTARRYCDRVVGMRDGRIVFDGLPEQLTTGVAREIYGADASFSEAATSTEIDTLDAALPARQRAGATA</sequence>
<reference key="1">
    <citation type="journal article" date="2004" name="Nature">
        <title>Genome sequence of Silicibacter pomeroyi reveals adaptations to the marine environment.</title>
        <authorList>
            <person name="Moran M.A."/>
            <person name="Buchan A."/>
            <person name="Gonzalez J.M."/>
            <person name="Heidelberg J.F."/>
            <person name="Whitman W.B."/>
            <person name="Kiene R.P."/>
            <person name="Henriksen J.R."/>
            <person name="King G.M."/>
            <person name="Belas R."/>
            <person name="Fuqua C."/>
            <person name="Brinkac L.M."/>
            <person name="Lewis M."/>
            <person name="Johri S."/>
            <person name="Weaver B."/>
            <person name="Pai G."/>
            <person name="Eisen J.A."/>
            <person name="Rahe E."/>
            <person name="Sheldon W.M."/>
            <person name="Ye W."/>
            <person name="Miller T.R."/>
            <person name="Carlton J."/>
            <person name="Rasko D.A."/>
            <person name="Paulsen I.T."/>
            <person name="Ren Q."/>
            <person name="Daugherty S.C."/>
            <person name="DeBoy R.T."/>
            <person name="Dodson R.J."/>
            <person name="Durkin A.S."/>
            <person name="Madupu R."/>
            <person name="Nelson W.C."/>
            <person name="Sullivan S.A."/>
            <person name="Rosovitz M.J."/>
            <person name="Haft D.H."/>
            <person name="Selengut J."/>
            <person name="Ward N."/>
        </authorList>
    </citation>
    <scope>NUCLEOTIDE SEQUENCE [LARGE SCALE GENOMIC DNA]</scope>
    <source>
        <strain>ATCC 700808 / DSM 15171 / DSS-3</strain>
    </source>
</reference>
<reference key="2">
    <citation type="journal article" date="2014" name="Stand. Genomic Sci.">
        <title>An updated genome annotation for the model marine bacterium Ruegeria pomeroyi DSS-3.</title>
        <authorList>
            <person name="Rivers A.R."/>
            <person name="Smith C.B."/>
            <person name="Moran M.A."/>
        </authorList>
    </citation>
    <scope>GENOME REANNOTATION</scope>
    <source>
        <strain>ATCC 700808 / DSM 15171 / DSS-3</strain>
    </source>
</reference>